<protein>
    <recommendedName>
        <fullName>Uncharacterized protein YHR022C</fullName>
    </recommendedName>
</protein>
<sequence>MSVRLSYGASLASIPRCFDLKSSKITVMGDDHSGKTSLVRSWLGSSFQISDANRYRVSDLYHKTIQFDTLVKYYRTFGVKGQLPNYAGFKAKNSGTIYESCGNFLEERLINANKSTAQRRTSIDVQVFDTNQMEVSYLSELTTLQIRQSDAIILCFDSTNDSSLASLESYICIIHHVRLECELDIPIIIACTKCDLDSERTITHEKVLTFIQELGFSPGNLDYFETSSKFNVNVEDLFLAVLLKIEKSKSDRRKLL</sequence>
<proteinExistence type="predicted"/>
<name>YHI2_YEAST</name>
<feature type="chain" id="PRO_0000202890" description="Uncharacterized protein YHR022C">
    <location>
        <begin position="1"/>
        <end position="256"/>
    </location>
</feature>
<feature type="binding site" evidence="1">
    <location>
        <begin position="29"/>
        <end position="36"/>
    </location>
    <ligand>
        <name>ATP</name>
        <dbReference type="ChEBI" id="CHEBI:30616"/>
    </ligand>
</feature>
<dbReference type="EMBL" id="U10399">
    <property type="protein sequence ID" value="AAB68876.1"/>
    <property type="molecule type" value="Genomic_DNA"/>
</dbReference>
<dbReference type="EMBL" id="AY558515">
    <property type="protein sequence ID" value="AAS56841.1"/>
    <property type="molecule type" value="Genomic_DNA"/>
</dbReference>
<dbReference type="EMBL" id="BK006934">
    <property type="protein sequence ID" value="DAA06712.1"/>
    <property type="molecule type" value="Genomic_DNA"/>
</dbReference>
<dbReference type="PIR" id="S46777">
    <property type="entry name" value="S46777"/>
</dbReference>
<dbReference type="RefSeq" id="NP_011887.1">
    <property type="nucleotide sequence ID" value="NM_001179152.1"/>
</dbReference>
<dbReference type="SMR" id="P38763"/>
<dbReference type="BioGRID" id="36453">
    <property type="interactions" value="35"/>
</dbReference>
<dbReference type="DIP" id="DIP-1876N"/>
<dbReference type="FunCoup" id="P38763">
    <property type="interactions" value="172"/>
</dbReference>
<dbReference type="IntAct" id="P38763">
    <property type="interactions" value="8"/>
</dbReference>
<dbReference type="MINT" id="P38763"/>
<dbReference type="STRING" id="4932.YHR022C"/>
<dbReference type="iPTMnet" id="P38763"/>
<dbReference type="PaxDb" id="4932-YHR022C"/>
<dbReference type="PeptideAtlas" id="P38763"/>
<dbReference type="EnsemblFungi" id="YHR022C_mRNA">
    <property type="protein sequence ID" value="YHR022C"/>
    <property type="gene ID" value="YHR022C"/>
</dbReference>
<dbReference type="GeneID" id="856417"/>
<dbReference type="KEGG" id="sce:YHR022C"/>
<dbReference type="AGR" id="SGD:S000001064"/>
<dbReference type="SGD" id="S000001064">
    <property type="gene designation" value="YHR022C"/>
</dbReference>
<dbReference type="VEuPathDB" id="FungiDB:YHR022C"/>
<dbReference type="eggNOG" id="KOG0093">
    <property type="taxonomic scope" value="Eukaryota"/>
</dbReference>
<dbReference type="GeneTree" id="ENSGT00990000209835"/>
<dbReference type="HOGENOM" id="CLU_1086669_0_0_1"/>
<dbReference type="InParanoid" id="P38763"/>
<dbReference type="OMA" id="IPRCFDL"/>
<dbReference type="OrthoDB" id="25896at2759"/>
<dbReference type="BioCyc" id="YEAST:G3O-31083-MONOMER"/>
<dbReference type="Reactome" id="R-SCE-8873719">
    <property type="pathway name" value="RAB geranylgeranylation"/>
</dbReference>
<dbReference type="BioGRID-ORCS" id="856417">
    <property type="hits" value="0 hits in 10 CRISPR screens"/>
</dbReference>
<dbReference type="PRO" id="PR:P38763"/>
<dbReference type="Proteomes" id="UP000002311">
    <property type="component" value="Chromosome VIII"/>
</dbReference>
<dbReference type="RNAct" id="P38763">
    <property type="molecule type" value="protein"/>
</dbReference>
<dbReference type="GO" id="GO:0012505">
    <property type="term" value="C:endomembrane system"/>
    <property type="evidence" value="ECO:0000318"/>
    <property type="project" value="GO_Central"/>
</dbReference>
<dbReference type="GO" id="GO:0005524">
    <property type="term" value="F:ATP binding"/>
    <property type="evidence" value="ECO:0007669"/>
    <property type="project" value="UniProtKB-KW"/>
</dbReference>
<dbReference type="GO" id="GO:0005525">
    <property type="term" value="F:GTP binding"/>
    <property type="evidence" value="ECO:0007669"/>
    <property type="project" value="InterPro"/>
</dbReference>
<dbReference type="GO" id="GO:0003924">
    <property type="term" value="F:GTPase activity"/>
    <property type="evidence" value="ECO:0000318"/>
    <property type="project" value="GO_Central"/>
</dbReference>
<dbReference type="GO" id="GO:0006886">
    <property type="term" value="P:intracellular protein transport"/>
    <property type="evidence" value="ECO:0000318"/>
    <property type="project" value="GO_Central"/>
</dbReference>
<dbReference type="CDD" id="cd00882">
    <property type="entry name" value="Ras_like_GTPase"/>
    <property type="match status" value="1"/>
</dbReference>
<dbReference type="Gene3D" id="3.40.50.300">
    <property type="entry name" value="P-loop containing nucleotide triphosphate hydrolases"/>
    <property type="match status" value="1"/>
</dbReference>
<dbReference type="InterPro" id="IPR027417">
    <property type="entry name" value="P-loop_NTPase"/>
</dbReference>
<dbReference type="InterPro" id="IPR001806">
    <property type="entry name" value="Small_GTPase"/>
</dbReference>
<dbReference type="PANTHER" id="PTHR47978">
    <property type="match status" value="1"/>
</dbReference>
<dbReference type="Pfam" id="PF00071">
    <property type="entry name" value="Ras"/>
    <property type="match status" value="1"/>
</dbReference>
<dbReference type="PRINTS" id="PR00449">
    <property type="entry name" value="RASTRNSFRMNG"/>
</dbReference>
<dbReference type="SMART" id="SM00175">
    <property type="entry name" value="RAB"/>
    <property type="match status" value="1"/>
</dbReference>
<dbReference type="SMART" id="SM00173">
    <property type="entry name" value="RAS"/>
    <property type="match status" value="1"/>
</dbReference>
<dbReference type="SUPFAM" id="SSF52540">
    <property type="entry name" value="P-loop containing nucleoside triphosphate hydrolases"/>
    <property type="match status" value="1"/>
</dbReference>
<dbReference type="PROSITE" id="PS51419">
    <property type="entry name" value="RAB"/>
    <property type="match status" value="1"/>
</dbReference>
<accession>P38763</accession>
<accession>D3DKW8</accession>
<gene>
    <name type="ordered locus">YHR022C</name>
</gene>
<keyword id="KW-0067">ATP-binding</keyword>
<keyword id="KW-0547">Nucleotide-binding</keyword>
<keyword id="KW-1185">Reference proteome</keyword>
<reference key="1">
    <citation type="journal article" date="1994" name="Science">
        <title>Complete nucleotide sequence of Saccharomyces cerevisiae chromosome VIII.</title>
        <authorList>
            <person name="Johnston M."/>
            <person name="Andrews S."/>
            <person name="Brinkman R."/>
            <person name="Cooper J."/>
            <person name="Ding H."/>
            <person name="Dover J."/>
            <person name="Du Z."/>
            <person name="Favello A."/>
            <person name="Fulton L."/>
            <person name="Gattung S."/>
            <person name="Geisel C."/>
            <person name="Kirsten J."/>
            <person name="Kucaba T."/>
            <person name="Hillier L.W."/>
            <person name="Jier M."/>
            <person name="Johnston L."/>
            <person name="Langston Y."/>
            <person name="Latreille P."/>
            <person name="Louis E.J."/>
            <person name="Macri C."/>
            <person name="Mardis E."/>
            <person name="Menezes S."/>
            <person name="Mouser L."/>
            <person name="Nhan M."/>
            <person name="Rifkin L."/>
            <person name="Riles L."/>
            <person name="St Peter H."/>
            <person name="Trevaskis E."/>
            <person name="Vaughan K."/>
            <person name="Vignati D."/>
            <person name="Wilcox L."/>
            <person name="Wohldman P."/>
            <person name="Waterston R."/>
            <person name="Wilson R."/>
            <person name="Vaudin M."/>
        </authorList>
    </citation>
    <scope>NUCLEOTIDE SEQUENCE [LARGE SCALE GENOMIC DNA]</scope>
    <source>
        <strain>ATCC 204508 / S288c</strain>
    </source>
</reference>
<reference key="2">
    <citation type="journal article" date="2014" name="G3 (Bethesda)">
        <title>The reference genome sequence of Saccharomyces cerevisiae: Then and now.</title>
        <authorList>
            <person name="Engel S.R."/>
            <person name="Dietrich F.S."/>
            <person name="Fisk D.G."/>
            <person name="Binkley G."/>
            <person name="Balakrishnan R."/>
            <person name="Costanzo M.C."/>
            <person name="Dwight S.S."/>
            <person name="Hitz B.C."/>
            <person name="Karra K."/>
            <person name="Nash R.S."/>
            <person name="Weng S."/>
            <person name="Wong E.D."/>
            <person name="Lloyd P."/>
            <person name="Skrzypek M.S."/>
            <person name="Miyasato S.R."/>
            <person name="Simison M."/>
            <person name="Cherry J.M."/>
        </authorList>
    </citation>
    <scope>GENOME REANNOTATION</scope>
    <source>
        <strain>ATCC 204508 / S288c</strain>
    </source>
</reference>
<reference key="3">
    <citation type="journal article" date="2007" name="Genome Res.">
        <title>Approaching a complete repository of sequence-verified protein-encoding clones for Saccharomyces cerevisiae.</title>
        <authorList>
            <person name="Hu Y."/>
            <person name="Rolfs A."/>
            <person name="Bhullar B."/>
            <person name="Murthy T.V.S."/>
            <person name="Zhu C."/>
            <person name="Berger M.F."/>
            <person name="Camargo A.A."/>
            <person name="Kelley F."/>
            <person name="McCarron S."/>
            <person name="Jepson D."/>
            <person name="Richardson A."/>
            <person name="Raphael J."/>
            <person name="Moreira D."/>
            <person name="Taycher E."/>
            <person name="Zuo D."/>
            <person name="Mohr S."/>
            <person name="Kane M.F."/>
            <person name="Williamson J."/>
            <person name="Simpson A.J.G."/>
            <person name="Bulyk M.L."/>
            <person name="Harlow E."/>
            <person name="Marsischky G."/>
            <person name="Kolodner R.D."/>
            <person name="LaBaer J."/>
        </authorList>
    </citation>
    <scope>NUCLEOTIDE SEQUENCE [GENOMIC DNA]</scope>
    <source>
        <strain>ATCC 204508 / S288c</strain>
    </source>
</reference>
<evidence type="ECO:0000255" key="1"/>
<organism>
    <name type="scientific">Saccharomyces cerevisiae (strain ATCC 204508 / S288c)</name>
    <name type="common">Baker's yeast</name>
    <dbReference type="NCBI Taxonomy" id="559292"/>
    <lineage>
        <taxon>Eukaryota</taxon>
        <taxon>Fungi</taxon>
        <taxon>Dikarya</taxon>
        <taxon>Ascomycota</taxon>
        <taxon>Saccharomycotina</taxon>
        <taxon>Saccharomycetes</taxon>
        <taxon>Saccharomycetales</taxon>
        <taxon>Saccharomycetaceae</taxon>
        <taxon>Saccharomyces</taxon>
    </lineage>
</organism>